<dbReference type="EC" id="2.7.7.6" evidence="1"/>
<dbReference type="EMBL" id="CP000866">
    <property type="protein sequence ID" value="ABX12242.1"/>
    <property type="molecule type" value="Genomic_DNA"/>
</dbReference>
<dbReference type="RefSeq" id="WP_012214729.1">
    <property type="nucleotide sequence ID" value="NC_010085.1"/>
</dbReference>
<dbReference type="SMR" id="A9A458"/>
<dbReference type="FunCoup" id="A9A458">
    <property type="interactions" value="5"/>
</dbReference>
<dbReference type="STRING" id="436308.Nmar_0346"/>
<dbReference type="EnsemblBacteria" id="ABX12242">
    <property type="protein sequence ID" value="ABX12242"/>
    <property type="gene ID" value="Nmar_0346"/>
</dbReference>
<dbReference type="GeneID" id="5773056"/>
<dbReference type="KEGG" id="nmr:Nmar_0346"/>
<dbReference type="eggNOG" id="arCOG04258">
    <property type="taxonomic scope" value="Archaea"/>
</dbReference>
<dbReference type="HOGENOM" id="CLU_058320_4_0_2"/>
<dbReference type="InParanoid" id="A9A458"/>
<dbReference type="OrthoDB" id="30537at2157"/>
<dbReference type="PhylomeDB" id="A9A458"/>
<dbReference type="Proteomes" id="UP000000792">
    <property type="component" value="Chromosome"/>
</dbReference>
<dbReference type="GO" id="GO:0005737">
    <property type="term" value="C:cytoplasm"/>
    <property type="evidence" value="ECO:0007669"/>
    <property type="project" value="UniProtKB-SubCell"/>
</dbReference>
<dbReference type="GO" id="GO:0000428">
    <property type="term" value="C:DNA-directed RNA polymerase complex"/>
    <property type="evidence" value="ECO:0007669"/>
    <property type="project" value="UniProtKB-KW"/>
</dbReference>
<dbReference type="GO" id="GO:0003677">
    <property type="term" value="F:DNA binding"/>
    <property type="evidence" value="ECO:0007669"/>
    <property type="project" value="InterPro"/>
</dbReference>
<dbReference type="GO" id="GO:0003899">
    <property type="term" value="F:DNA-directed RNA polymerase activity"/>
    <property type="evidence" value="ECO:0007669"/>
    <property type="project" value="UniProtKB-UniRule"/>
</dbReference>
<dbReference type="GO" id="GO:0006351">
    <property type="term" value="P:DNA-templated transcription"/>
    <property type="evidence" value="ECO:0007669"/>
    <property type="project" value="UniProtKB-UniRule"/>
</dbReference>
<dbReference type="Gene3D" id="3.90.940.20">
    <property type="entry name" value="RPB5-like RNA polymerase subunit"/>
    <property type="match status" value="1"/>
</dbReference>
<dbReference type="HAMAP" id="MF_00025">
    <property type="entry name" value="RNApol_Rpo5_RPB5"/>
    <property type="match status" value="1"/>
</dbReference>
<dbReference type="InterPro" id="IPR014381">
    <property type="entry name" value="Arch_Rpo5/euc_Rpb5"/>
</dbReference>
<dbReference type="InterPro" id="IPR000783">
    <property type="entry name" value="RNA_pol_subH/Rpb5_C"/>
</dbReference>
<dbReference type="InterPro" id="IPR035913">
    <property type="entry name" value="RPB5-like_sf"/>
</dbReference>
<dbReference type="NCBIfam" id="NF007129">
    <property type="entry name" value="PRK09570.1"/>
    <property type="match status" value="1"/>
</dbReference>
<dbReference type="PANTHER" id="PTHR10535">
    <property type="entry name" value="DNA-DIRECTED RNA POLYMERASES I, II, AND III SUBUNIT RPABC1"/>
    <property type="match status" value="1"/>
</dbReference>
<dbReference type="PANTHER" id="PTHR10535:SF0">
    <property type="entry name" value="DNA-DIRECTED RNA POLYMERASES I, II, AND III SUBUNIT RPABC1"/>
    <property type="match status" value="1"/>
</dbReference>
<dbReference type="Pfam" id="PF01191">
    <property type="entry name" value="RNA_pol_Rpb5_C"/>
    <property type="match status" value="1"/>
</dbReference>
<dbReference type="SUPFAM" id="SSF55287">
    <property type="entry name" value="RPB5-like RNA polymerase subunit"/>
    <property type="match status" value="1"/>
</dbReference>
<proteinExistence type="inferred from homology"/>
<keyword id="KW-0963">Cytoplasm</keyword>
<keyword id="KW-0240">DNA-directed RNA polymerase</keyword>
<keyword id="KW-0548">Nucleotidyltransferase</keyword>
<keyword id="KW-1185">Reference proteome</keyword>
<keyword id="KW-0804">Transcription</keyword>
<keyword id="KW-0808">Transferase</keyword>
<evidence type="ECO:0000255" key="1">
    <source>
        <dbReference type="HAMAP-Rule" id="MF_00025"/>
    </source>
</evidence>
<sequence length="83" mass="9354">MATKKNQILVPDHIYVPKHEIISKTEAEEVLKKYNCKPTELPLIFVNDPAILGLGVKPGDMIKITRKSPTAGEGLYYRYVVEV</sequence>
<reference key="1">
    <citation type="journal article" date="2010" name="Proc. Natl. Acad. Sci. U.S.A.">
        <title>Nitrosopumilus maritimus genome reveals unique mechanisms for nitrification and autotrophy in globally distributed marine crenarchaea.</title>
        <authorList>
            <person name="Walker C.B."/>
            <person name="de la Torre J.R."/>
            <person name="Klotz M.G."/>
            <person name="Urakawa H."/>
            <person name="Pinel N."/>
            <person name="Arp D.J."/>
            <person name="Brochier-Armanet C."/>
            <person name="Chain P.S."/>
            <person name="Chan P.P."/>
            <person name="Gollabgir A."/>
            <person name="Hemp J."/>
            <person name="Hugler M."/>
            <person name="Karr E.A."/>
            <person name="Konneke M."/>
            <person name="Shin M."/>
            <person name="Lawton T.J."/>
            <person name="Lowe T."/>
            <person name="Martens-Habbena W."/>
            <person name="Sayavedra-Soto L.A."/>
            <person name="Lang D."/>
            <person name="Sievert S.M."/>
            <person name="Rosenzweig A.C."/>
            <person name="Manning G."/>
            <person name="Stahl D.A."/>
        </authorList>
    </citation>
    <scope>NUCLEOTIDE SEQUENCE [LARGE SCALE GENOMIC DNA]</scope>
    <source>
        <strain>SCM1</strain>
    </source>
</reference>
<protein>
    <recommendedName>
        <fullName evidence="1">DNA-directed RNA polymerase subunit Rpo5</fullName>
        <ecNumber evidence="1">2.7.7.6</ecNumber>
    </recommendedName>
    <alternativeName>
        <fullName evidence="1">DNA-directed RNA polymerase subunit H</fullName>
    </alternativeName>
</protein>
<comment type="function">
    <text evidence="1">DNA-dependent RNA polymerase (RNAP) catalyzes the transcription of DNA into RNA using the four ribonucleoside triphosphates as substrates.</text>
</comment>
<comment type="catalytic activity">
    <reaction evidence="1">
        <text>RNA(n) + a ribonucleoside 5'-triphosphate = RNA(n+1) + diphosphate</text>
        <dbReference type="Rhea" id="RHEA:21248"/>
        <dbReference type="Rhea" id="RHEA-COMP:14527"/>
        <dbReference type="Rhea" id="RHEA-COMP:17342"/>
        <dbReference type="ChEBI" id="CHEBI:33019"/>
        <dbReference type="ChEBI" id="CHEBI:61557"/>
        <dbReference type="ChEBI" id="CHEBI:140395"/>
        <dbReference type="EC" id="2.7.7.6"/>
    </reaction>
</comment>
<comment type="subunit">
    <text evidence="1">Part of the RNA polymerase complex.</text>
</comment>
<comment type="subcellular location">
    <subcellularLocation>
        <location evidence="1">Cytoplasm</location>
    </subcellularLocation>
</comment>
<comment type="similarity">
    <text evidence="1">Belongs to the archaeal Rpo5/eukaryotic RPB5 RNA polymerase subunit family.</text>
</comment>
<feature type="chain" id="PRO_1000090210" description="DNA-directed RNA polymerase subunit Rpo5">
    <location>
        <begin position="1"/>
        <end position="83"/>
    </location>
</feature>
<name>RPO5_NITMS</name>
<accession>A9A458</accession>
<organism>
    <name type="scientific">Nitrosopumilus maritimus (strain SCM1)</name>
    <dbReference type="NCBI Taxonomy" id="436308"/>
    <lineage>
        <taxon>Archaea</taxon>
        <taxon>Nitrososphaerota</taxon>
        <taxon>Nitrososphaeria</taxon>
        <taxon>Nitrosopumilales</taxon>
        <taxon>Nitrosopumilaceae</taxon>
        <taxon>Nitrosopumilus</taxon>
    </lineage>
</organism>
<gene>
    <name evidence="1" type="primary">rpo5</name>
    <name evidence="1" type="synonym">rpoH</name>
    <name type="ordered locus">Nmar_0346</name>
</gene>